<feature type="chain" id="PRO_0000184955" description="Iron-sulfur cluster carrier protein">
    <location>
        <begin position="1"/>
        <end position="295"/>
    </location>
</feature>
<feature type="binding site" evidence="1">
    <location>
        <begin position="38"/>
        <end position="45"/>
    </location>
    <ligand>
        <name>ATP</name>
        <dbReference type="ChEBI" id="CHEBI:30616"/>
    </ligand>
</feature>
<proteinExistence type="inferred from homology"/>
<gene>
    <name type="ordered locus">PF1145</name>
</gene>
<accession>Q8U1R0</accession>
<reference key="1">
    <citation type="journal article" date="1999" name="Genetics">
        <title>Divergence of the hyperthermophilic archaea Pyrococcus furiosus and P. horikoshii inferred from complete genomic sequences.</title>
        <authorList>
            <person name="Maeder D.L."/>
            <person name="Weiss R.B."/>
            <person name="Dunn D.M."/>
            <person name="Cherry J.L."/>
            <person name="Gonzalez J.M."/>
            <person name="DiRuggiero J."/>
            <person name="Robb F.T."/>
        </authorList>
    </citation>
    <scope>NUCLEOTIDE SEQUENCE [LARGE SCALE GENOMIC DNA]</scope>
    <source>
        <strain>ATCC 43587 / DSM 3638 / JCM 8422 / Vc1</strain>
    </source>
</reference>
<sequence>MTIKAPTLNVPGLGVDPLTQRIKEKEKKWKYKIAVLSGKGGVGKSTVAVNLTAALAKMGYFVGILDADIHGPNVAKMFGIGNTDIYAEKFEDGHFEMIPPTVDFMGQVTPIKVMSMGMMVPEDQPIIWRGSLVTKAIKQLLGDVMWGELDFMIIDFPPGTGDEILTVVQSIQLDAAIVVTTPQEVALLDTGKAVNMMKKMEVPYIAVIENMSYLICPHCGNKIDIFGEGGGEKLAEKEGVDFLGKVPIDLKAREASDLGIPIVLYGDTPAAKAFMEIAEKLVNKLKEIKGDGREK</sequence>
<organism>
    <name type="scientific">Pyrococcus furiosus (strain ATCC 43587 / DSM 3638 / JCM 8422 / Vc1)</name>
    <dbReference type="NCBI Taxonomy" id="186497"/>
    <lineage>
        <taxon>Archaea</taxon>
        <taxon>Methanobacteriati</taxon>
        <taxon>Methanobacteriota</taxon>
        <taxon>Thermococci</taxon>
        <taxon>Thermococcales</taxon>
        <taxon>Thermococcaceae</taxon>
        <taxon>Pyrococcus</taxon>
    </lineage>
</organism>
<evidence type="ECO:0000255" key="1">
    <source>
        <dbReference type="HAMAP-Rule" id="MF_02040"/>
    </source>
</evidence>
<comment type="function">
    <text evidence="1">Binds and transfers iron-sulfur (Fe-S) clusters to target apoproteins. Can hydrolyze ATP.</text>
</comment>
<comment type="subunit">
    <text evidence="1">Homodimer.</text>
</comment>
<comment type="similarity">
    <text evidence="1">Belongs to the Mrp/NBP35 ATP-binding proteins family.</text>
</comment>
<name>APBC_PYRFU</name>
<protein>
    <recommendedName>
        <fullName evidence="1">Iron-sulfur cluster carrier protein</fullName>
    </recommendedName>
</protein>
<keyword id="KW-0067">ATP-binding</keyword>
<keyword id="KW-0378">Hydrolase</keyword>
<keyword id="KW-0408">Iron</keyword>
<keyword id="KW-0411">Iron-sulfur</keyword>
<keyword id="KW-0479">Metal-binding</keyword>
<keyword id="KW-0547">Nucleotide-binding</keyword>
<keyword id="KW-1185">Reference proteome</keyword>
<dbReference type="EMBL" id="AE009950">
    <property type="protein sequence ID" value="AAL81269.1"/>
    <property type="molecule type" value="Genomic_DNA"/>
</dbReference>
<dbReference type="RefSeq" id="WP_011012285.1">
    <property type="nucleotide sequence ID" value="NZ_CP023154.1"/>
</dbReference>
<dbReference type="SMR" id="Q8U1R0"/>
<dbReference type="STRING" id="186497.PF1145"/>
<dbReference type="PaxDb" id="186497-PF1145"/>
<dbReference type="KEGG" id="pfu:PF1145"/>
<dbReference type="PATRIC" id="fig|186497.12.peg.1206"/>
<dbReference type="eggNOG" id="arCOG00585">
    <property type="taxonomic scope" value="Archaea"/>
</dbReference>
<dbReference type="HOGENOM" id="CLU_024839_0_1_2"/>
<dbReference type="OrthoDB" id="8297at2157"/>
<dbReference type="PhylomeDB" id="Q8U1R0"/>
<dbReference type="Proteomes" id="UP000001013">
    <property type="component" value="Chromosome"/>
</dbReference>
<dbReference type="GO" id="GO:0051539">
    <property type="term" value="F:4 iron, 4 sulfur cluster binding"/>
    <property type="evidence" value="ECO:0007669"/>
    <property type="project" value="TreeGrafter"/>
</dbReference>
<dbReference type="GO" id="GO:0005524">
    <property type="term" value="F:ATP binding"/>
    <property type="evidence" value="ECO:0007669"/>
    <property type="project" value="UniProtKB-UniRule"/>
</dbReference>
<dbReference type="GO" id="GO:0016887">
    <property type="term" value="F:ATP hydrolysis activity"/>
    <property type="evidence" value="ECO:0007669"/>
    <property type="project" value="UniProtKB-UniRule"/>
</dbReference>
<dbReference type="GO" id="GO:0140663">
    <property type="term" value="F:ATP-dependent FeS chaperone activity"/>
    <property type="evidence" value="ECO:0007669"/>
    <property type="project" value="InterPro"/>
</dbReference>
<dbReference type="GO" id="GO:0046872">
    <property type="term" value="F:metal ion binding"/>
    <property type="evidence" value="ECO:0007669"/>
    <property type="project" value="UniProtKB-KW"/>
</dbReference>
<dbReference type="GO" id="GO:0016226">
    <property type="term" value="P:iron-sulfur cluster assembly"/>
    <property type="evidence" value="ECO:0007669"/>
    <property type="project" value="InterPro"/>
</dbReference>
<dbReference type="CDD" id="cd02037">
    <property type="entry name" value="Mrp_NBP35"/>
    <property type="match status" value="1"/>
</dbReference>
<dbReference type="FunFam" id="3.40.50.300:FF:001119">
    <property type="entry name" value="Iron-sulfur cluster carrier protein"/>
    <property type="match status" value="1"/>
</dbReference>
<dbReference type="Gene3D" id="3.40.50.300">
    <property type="entry name" value="P-loop containing nucleotide triphosphate hydrolases"/>
    <property type="match status" value="1"/>
</dbReference>
<dbReference type="HAMAP" id="MF_02040">
    <property type="entry name" value="Mrp_NBP35"/>
    <property type="match status" value="1"/>
</dbReference>
<dbReference type="InterPro" id="IPR000808">
    <property type="entry name" value="Mrp-like_CS"/>
</dbReference>
<dbReference type="InterPro" id="IPR019591">
    <property type="entry name" value="Mrp/NBP35_ATP-bd"/>
</dbReference>
<dbReference type="InterPro" id="IPR044304">
    <property type="entry name" value="NUBPL-like"/>
</dbReference>
<dbReference type="InterPro" id="IPR027417">
    <property type="entry name" value="P-loop_NTPase"/>
</dbReference>
<dbReference type="InterPro" id="IPR033756">
    <property type="entry name" value="YlxH/NBP35"/>
</dbReference>
<dbReference type="PANTHER" id="PTHR42961">
    <property type="entry name" value="IRON-SULFUR PROTEIN NUBPL"/>
    <property type="match status" value="1"/>
</dbReference>
<dbReference type="PANTHER" id="PTHR42961:SF2">
    <property type="entry name" value="IRON-SULFUR PROTEIN NUBPL"/>
    <property type="match status" value="1"/>
</dbReference>
<dbReference type="Pfam" id="PF10609">
    <property type="entry name" value="ParA"/>
    <property type="match status" value="1"/>
</dbReference>
<dbReference type="SUPFAM" id="SSF52540">
    <property type="entry name" value="P-loop containing nucleoside triphosphate hydrolases"/>
    <property type="match status" value="1"/>
</dbReference>
<dbReference type="PROSITE" id="PS01215">
    <property type="entry name" value="MRP"/>
    <property type="match status" value="1"/>
</dbReference>